<gene>
    <name evidence="1" type="primary">panC/cmk</name>
    <name type="ordered locus">P9215_18631</name>
</gene>
<evidence type="ECO:0000255" key="1">
    <source>
        <dbReference type="HAMAP-Rule" id="MF_01349"/>
    </source>
</evidence>
<comment type="function">
    <text evidence="1">Catalyzes the condensation of pantoate with beta-alanine in an ATP-dependent reaction via a pantoyl-adenylate intermediate.</text>
</comment>
<comment type="function">
    <text evidence="1">Catalyzes the transfer of a phosphate group from ATP to either CMP or dCMP to form CDP or dCDP and ADP, respectively.</text>
</comment>
<comment type="catalytic activity">
    <reaction evidence="1">
        <text>(R)-pantoate + beta-alanine + ATP = (R)-pantothenate + AMP + diphosphate + H(+)</text>
        <dbReference type="Rhea" id="RHEA:10912"/>
        <dbReference type="ChEBI" id="CHEBI:15378"/>
        <dbReference type="ChEBI" id="CHEBI:15980"/>
        <dbReference type="ChEBI" id="CHEBI:29032"/>
        <dbReference type="ChEBI" id="CHEBI:30616"/>
        <dbReference type="ChEBI" id="CHEBI:33019"/>
        <dbReference type="ChEBI" id="CHEBI:57966"/>
        <dbReference type="ChEBI" id="CHEBI:456215"/>
        <dbReference type="EC" id="6.3.2.1"/>
    </reaction>
</comment>
<comment type="catalytic activity">
    <reaction evidence="1">
        <text>CMP + ATP = CDP + ADP</text>
        <dbReference type="Rhea" id="RHEA:11600"/>
        <dbReference type="ChEBI" id="CHEBI:30616"/>
        <dbReference type="ChEBI" id="CHEBI:58069"/>
        <dbReference type="ChEBI" id="CHEBI:60377"/>
        <dbReference type="ChEBI" id="CHEBI:456216"/>
        <dbReference type="EC" id="2.7.4.25"/>
    </reaction>
</comment>
<comment type="catalytic activity">
    <reaction evidence="1">
        <text>dCMP + ATP = dCDP + ADP</text>
        <dbReference type="Rhea" id="RHEA:25094"/>
        <dbReference type="ChEBI" id="CHEBI:30616"/>
        <dbReference type="ChEBI" id="CHEBI:57566"/>
        <dbReference type="ChEBI" id="CHEBI:58593"/>
        <dbReference type="ChEBI" id="CHEBI:456216"/>
        <dbReference type="EC" id="2.7.4.25"/>
    </reaction>
</comment>
<comment type="pathway">
    <text evidence="1">Cofactor biosynthesis; (R)-pantothenate biosynthesis; (R)-pantothenate from (R)-pantoate and beta-alanine: step 1/1.</text>
</comment>
<comment type="subcellular location">
    <subcellularLocation>
        <location evidence="1">Cytoplasm</location>
    </subcellularLocation>
</comment>
<comment type="similarity">
    <text evidence="1">In the N-terminal section; belongs to the pantothenate synthetase family.</text>
</comment>
<comment type="similarity">
    <text evidence="1">In the C-terminal section; belongs to the cytidylate kinase family. Type 1 subfamily.</text>
</comment>
<accession>A8G795</accession>
<name>PANCY_PROM2</name>
<sequence length="510" mass="58304">MKKVIIRKTEEIENWKRNINNEINFIPTMGNLHNGHIKLISTAKNDNSNVNLVSIFINPLQFDNKLDLENYPKTIDNDIKISFSNGADAIFIPSNEDIYPPNNKNIKFLKAPIELSSALCGLNRIGHFDGVCTVVYRLLNLIKPKNLYLGEKDWQQLLILKNLVLKEKLNVAIKSIPTQRDFDGIPLSSRNVHLSKNERKLIRFFSSELLEAKKNFQQEKNINLNEIIKKLSAKKISIEYLEHLHPHTLQKARLEDNISLLAGAIRCGETRLIDHVFLMKRRPIIAIDGPAGSGKSTVTKLIAKKLKLLYLDTGAMYRALSWLLLKENIDYKKEKKLLNIFKDISIVFKSNTNSHQDVYVNNCCVTEEIRSQKISSIVSKISSIKEVRKFLVEEQRKIGESGGLVAEGRDIGTTVFPNAELKIFLTASIDERAKRRKSDKQSKDSQEIDLDTLKELIEKRDFEDSNREISPLIKANDAIEIISDGYTINEVVDKIIDLYNDKIPKETEIK</sequence>
<keyword id="KW-0067">ATP-binding</keyword>
<keyword id="KW-0963">Cytoplasm</keyword>
<keyword id="KW-0418">Kinase</keyword>
<keyword id="KW-0436">Ligase</keyword>
<keyword id="KW-0511">Multifunctional enzyme</keyword>
<keyword id="KW-0547">Nucleotide-binding</keyword>
<keyword id="KW-0566">Pantothenate biosynthesis</keyword>
<keyword id="KW-0808">Transferase</keyword>
<reference key="1">
    <citation type="journal article" date="2007" name="PLoS Genet.">
        <title>Patterns and implications of gene gain and loss in the evolution of Prochlorococcus.</title>
        <authorList>
            <person name="Kettler G.C."/>
            <person name="Martiny A.C."/>
            <person name="Huang K."/>
            <person name="Zucker J."/>
            <person name="Coleman M.L."/>
            <person name="Rodrigue S."/>
            <person name="Chen F."/>
            <person name="Lapidus A."/>
            <person name="Ferriera S."/>
            <person name="Johnson J."/>
            <person name="Steglich C."/>
            <person name="Church G.M."/>
            <person name="Richardson P."/>
            <person name="Chisholm S.W."/>
        </authorList>
    </citation>
    <scope>NUCLEOTIDE SEQUENCE [LARGE SCALE GENOMIC DNA]</scope>
    <source>
        <strain>MIT 9215</strain>
    </source>
</reference>
<dbReference type="EC" id="6.3.2.1" evidence="1"/>
<dbReference type="EC" id="2.7.4.25" evidence="1"/>
<dbReference type="EMBL" id="CP000825">
    <property type="protein sequence ID" value="ABV51476.1"/>
    <property type="molecule type" value="Genomic_DNA"/>
</dbReference>
<dbReference type="RefSeq" id="WP_012008477.1">
    <property type="nucleotide sequence ID" value="NC_009840.1"/>
</dbReference>
<dbReference type="SMR" id="A8G795"/>
<dbReference type="STRING" id="93060.P9215_18631"/>
<dbReference type="KEGG" id="pmh:P9215_18631"/>
<dbReference type="eggNOG" id="COG0283">
    <property type="taxonomic scope" value="Bacteria"/>
</dbReference>
<dbReference type="eggNOG" id="COG0414">
    <property type="taxonomic scope" value="Bacteria"/>
</dbReference>
<dbReference type="HOGENOM" id="CLU_037427_0_0_3"/>
<dbReference type="OrthoDB" id="9773087at2"/>
<dbReference type="UniPathway" id="UPA00028">
    <property type="reaction ID" value="UER00005"/>
</dbReference>
<dbReference type="Proteomes" id="UP000002014">
    <property type="component" value="Chromosome"/>
</dbReference>
<dbReference type="GO" id="GO:0005829">
    <property type="term" value="C:cytosol"/>
    <property type="evidence" value="ECO:0007669"/>
    <property type="project" value="TreeGrafter"/>
</dbReference>
<dbReference type="GO" id="GO:0005524">
    <property type="term" value="F:ATP binding"/>
    <property type="evidence" value="ECO:0007669"/>
    <property type="project" value="UniProtKB-UniRule"/>
</dbReference>
<dbReference type="GO" id="GO:0036430">
    <property type="term" value="F:CMP kinase activity"/>
    <property type="evidence" value="ECO:0007669"/>
    <property type="project" value="RHEA"/>
</dbReference>
<dbReference type="GO" id="GO:0036431">
    <property type="term" value="F:dCMP kinase activity"/>
    <property type="evidence" value="ECO:0007669"/>
    <property type="project" value="RHEA"/>
</dbReference>
<dbReference type="GO" id="GO:0004592">
    <property type="term" value="F:pantoate-beta-alanine ligase activity"/>
    <property type="evidence" value="ECO:0007669"/>
    <property type="project" value="UniProtKB-UniRule"/>
</dbReference>
<dbReference type="GO" id="GO:0015949">
    <property type="term" value="P:nucleobase-containing small molecule interconversion"/>
    <property type="evidence" value="ECO:0007669"/>
    <property type="project" value="TreeGrafter"/>
</dbReference>
<dbReference type="GO" id="GO:0015940">
    <property type="term" value="P:pantothenate biosynthetic process"/>
    <property type="evidence" value="ECO:0007669"/>
    <property type="project" value="UniProtKB-UniRule"/>
</dbReference>
<dbReference type="GO" id="GO:0006220">
    <property type="term" value="P:pyrimidine nucleotide metabolic process"/>
    <property type="evidence" value="ECO:0007669"/>
    <property type="project" value="UniProtKB-UniRule"/>
</dbReference>
<dbReference type="CDD" id="cd02020">
    <property type="entry name" value="CMPK"/>
    <property type="match status" value="1"/>
</dbReference>
<dbReference type="Gene3D" id="3.40.50.620">
    <property type="entry name" value="HUPs"/>
    <property type="match status" value="1"/>
</dbReference>
<dbReference type="Gene3D" id="3.40.50.300">
    <property type="entry name" value="P-loop containing nucleotide triphosphate hydrolases"/>
    <property type="match status" value="1"/>
</dbReference>
<dbReference type="Gene3D" id="3.30.1300.10">
    <property type="entry name" value="Pantoate-beta-alanine ligase, C-terminal domain"/>
    <property type="match status" value="1"/>
</dbReference>
<dbReference type="HAMAP" id="MF_00238">
    <property type="entry name" value="Cytidyl_kinase_type1"/>
    <property type="match status" value="1"/>
</dbReference>
<dbReference type="HAMAP" id="MF_00158">
    <property type="entry name" value="PanC"/>
    <property type="match status" value="1"/>
</dbReference>
<dbReference type="HAMAP" id="MF_01349">
    <property type="entry name" value="PanCY"/>
    <property type="match status" value="1"/>
</dbReference>
<dbReference type="InterPro" id="IPR003136">
    <property type="entry name" value="Cytidylate_kin"/>
</dbReference>
<dbReference type="InterPro" id="IPR011994">
    <property type="entry name" value="Cytidylate_kinase_dom"/>
</dbReference>
<dbReference type="InterPro" id="IPR027417">
    <property type="entry name" value="P-loop_NTPase"/>
</dbReference>
<dbReference type="InterPro" id="IPR003721">
    <property type="entry name" value="Pantoate_ligase"/>
</dbReference>
<dbReference type="InterPro" id="IPR024894">
    <property type="entry name" value="Pantoate_ligase/cytidylate_kin"/>
</dbReference>
<dbReference type="InterPro" id="IPR042176">
    <property type="entry name" value="Pantoate_ligase_C"/>
</dbReference>
<dbReference type="InterPro" id="IPR014729">
    <property type="entry name" value="Rossmann-like_a/b/a_fold"/>
</dbReference>
<dbReference type="NCBIfam" id="TIGR00017">
    <property type="entry name" value="cmk"/>
    <property type="match status" value="1"/>
</dbReference>
<dbReference type="NCBIfam" id="TIGR00018">
    <property type="entry name" value="panC"/>
    <property type="match status" value="1"/>
</dbReference>
<dbReference type="NCBIfam" id="NF010004">
    <property type="entry name" value="PRK13477.1"/>
    <property type="match status" value="1"/>
</dbReference>
<dbReference type="PANTHER" id="PTHR21299:SF2">
    <property type="entry name" value="CYTIDYLATE KINASE"/>
    <property type="match status" value="1"/>
</dbReference>
<dbReference type="PANTHER" id="PTHR21299">
    <property type="entry name" value="CYTIDYLATE KINASE/PANTOATE-BETA-ALANINE LIGASE"/>
    <property type="match status" value="1"/>
</dbReference>
<dbReference type="Pfam" id="PF02224">
    <property type="entry name" value="Cytidylate_kin"/>
    <property type="match status" value="1"/>
</dbReference>
<dbReference type="Pfam" id="PF02569">
    <property type="entry name" value="Pantoate_ligase"/>
    <property type="match status" value="1"/>
</dbReference>
<dbReference type="SUPFAM" id="SSF52374">
    <property type="entry name" value="Nucleotidylyl transferase"/>
    <property type="match status" value="1"/>
</dbReference>
<dbReference type="SUPFAM" id="SSF52540">
    <property type="entry name" value="P-loop containing nucleoside triphosphate hydrolases"/>
    <property type="match status" value="1"/>
</dbReference>
<organism>
    <name type="scientific">Prochlorococcus marinus (strain MIT 9215)</name>
    <dbReference type="NCBI Taxonomy" id="93060"/>
    <lineage>
        <taxon>Bacteria</taxon>
        <taxon>Bacillati</taxon>
        <taxon>Cyanobacteriota</taxon>
        <taxon>Cyanophyceae</taxon>
        <taxon>Synechococcales</taxon>
        <taxon>Prochlorococcaceae</taxon>
        <taxon>Prochlorococcus</taxon>
    </lineage>
</organism>
<feature type="chain" id="PRO_0000333296" description="Bifunctional pantoate ligase/cytidylate kinase">
    <location>
        <begin position="1"/>
        <end position="510"/>
    </location>
</feature>
<feature type="region of interest" description="Pantoate--beta-alanine ligase">
    <location>
        <begin position="1"/>
        <end position="276"/>
    </location>
</feature>
<feature type="region of interest" description="Cytidylate kinase" evidence="1">
    <location>
        <begin position="277"/>
        <end position="510"/>
    </location>
</feature>
<feature type="active site" description="Proton donor" evidence="1">
    <location>
        <position position="36"/>
    </location>
</feature>
<feature type="binding site" evidence="1">
    <location>
        <begin position="29"/>
        <end position="36"/>
    </location>
    <ligand>
        <name>ATP</name>
        <dbReference type="ChEBI" id="CHEBI:30616"/>
    </ligand>
</feature>
<feature type="binding site" evidence="1">
    <location>
        <position position="61"/>
    </location>
    <ligand>
        <name>(R)-pantoate</name>
        <dbReference type="ChEBI" id="CHEBI:15980"/>
    </ligand>
</feature>
<feature type="binding site" evidence="1">
    <location>
        <position position="61"/>
    </location>
    <ligand>
        <name>beta-alanine</name>
        <dbReference type="ChEBI" id="CHEBI:57966"/>
    </ligand>
</feature>
<feature type="binding site" evidence="1">
    <location>
        <begin position="150"/>
        <end position="153"/>
    </location>
    <ligand>
        <name>ATP</name>
        <dbReference type="ChEBI" id="CHEBI:30616"/>
    </ligand>
</feature>
<feature type="binding site" evidence="1">
    <location>
        <position position="156"/>
    </location>
    <ligand>
        <name>(R)-pantoate</name>
        <dbReference type="ChEBI" id="CHEBI:15980"/>
    </ligand>
</feature>
<feature type="binding site" evidence="1">
    <location>
        <begin position="187"/>
        <end position="190"/>
    </location>
    <ligand>
        <name>ATP</name>
        <dbReference type="ChEBI" id="CHEBI:30616"/>
    </ligand>
</feature>
<proteinExistence type="inferred from homology"/>
<protein>
    <recommendedName>
        <fullName evidence="1">Bifunctional pantoate ligase/cytidylate kinase</fullName>
    </recommendedName>
    <domain>
        <recommendedName>
            <fullName evidence="1">Pantothenate synthetase</fullName>
            <shortName evidence="1">PS</shortName>
            <ecNumber evidence="1">6.3.2.1</ecNumber>
        </recommendedName>
        <alternativeName>
            <fullName evidence="1">Pantoate--beta-alanine ligase</fullName>
        </alternativeName>
        <alternativeName>
            <fullName evidence="1">Pantoate-activating enzyme</fullName>
        </alternativeName>
    </domain>
    <domain>
        <recommendedName>
            <fullName evidence="1">Cytidylate kinase</fullName>
            <shortName evidence="1">CK</shortName>
            <ecNumber evidence="1">2.7.4.25</ecNumber>
        </recommendedName>
        <alternativeName>
            <fullName evidence="1">Cytidine monophosphate kinase</fullName>
            <shortName evidence="1">CMP kinase</shortName>
        </alternativeName>
    </domain>
</protein>